<accession>B2IUL2</accession>
<sequence>MVTTAEKTNIGYITQIIGPVVDVKFPGGKLPQIYNALKIVGTNESGQEINITVEVQQLLGDNQVRTVAMSSTEGLVRGFEVTDTGAPITVPVGKATLGRIFNVLGEPVDNRGPVNAEASLPIHRSAPKFTDLETKPSVFETGIKVVDLLTPYRRGGKIGLFGGAGVGKTVIMMELINNIATQHGGVSVFAGVGERTREGNDLYNEMIESGVINNENLNESKIALVYGQMNEPPGARMRVGLSGLTVAEYFRDVNKQDVLLFIDNIFRFVQAGSEVSALLGRMPSAVGYQPTLGTDVGELQERITSTTEGSITSIQAVYVPADDLTDPAPATTFAHLDGTTVLSRGLAAKGIYPAVDPLGSTSTMLQPNIVGDEHYNTARAVQSTLQRYKELQDIIAILGLDELSEEDRLIVARARKVERFLSQPFFVAEVFTGSPGKYVKLEDTIKGFQKILSGELDALPEQAFYLVGDINEAIAKAEKIKG</sequence>
<comment type="function">
    <text evidence="1">Produces ATP from ADP in the presence of a proton gradient across the membrane. The catalytic sites are hosted primarily by the beta subunits.</text>
</comment>
<comment type="catalytic activity">
    <reaction evidence="1">
        <text>ATP + H2O + 4 H(+)(in) = ADP + phosphate + 5 H(+)(out)</text>
        <dbReference type="Rhea" id="RHEA:57720"/>
        <dbReference type="ChEBI" id="CHEBI:15377"/>
        <dbReference type="ChEBI" id="CHEBI:15378"/>
        <dbReference type="ChEBI" id="CHEBI:30616"/>
        <dbReference type="ChEBI" id="CHEBI:43474"/>
        <dbReference type="ChEBI" id="CHEBI:456216"/>
        <dbReference type="EC" id="7.1.2.2"/>
    </reaction>
</comment>
<comment type="subunit">
    <text evidence="1">F-type ATPases have 2 components, CF(1) - the catalytic core - and CF(0) - the membrane proton channel. CF(1) has five subunits: alpha(3), beta(3), gamma(1), delta(1), epsilon(1). CF(0) has four main subunits: a(1), b(1), b'(1) and c(9-12).</text>
</comment>
<comment type="subcellular location">
    <subcellularLocation>
        <location evidence="1">Cellular thylakoid membrane</location>
        <topology evidence="1">Peripheral membrane protein</topology>
    </subcellularLocation>
</comment>
<comment type="similarity">
    <text evidence="1">Belongs to the ATPase alpha/beta chains family.</text>
</comment>
<name>ATPB_NOSP7</name>
<gene>
    <name evidence="1" type="primary">atpD</name>
    <name evidence="1" type="synonym">atpB</name>
    <name type="ordered locus">Npun_R4417</name>
</gene>
<dbReference type="EC" id="7.1.2.2" evidence="1"/>
<dbReference type="EMBL" id="CP001037">
    <property type="protein sequence ID" value="ACC82787.1"/>
    <property type="molecule type" value="Genomic_DNA"/>
</dbReference>
<dbReference type="RefSeq" id="WP_012410748.1">
    <property type="nucleotide sequence ID" value="NC_010628.1"/>
</dbReference>
<dbReference type="SMR" id="B2IUL2"/>
<dbReference type="STRING" id="63737.Npun_R4417"/>
<dbReference type="EnsemblBacteria" id="ACC82787">
    <property type="protein sequence ID" value="ACC82787"/>
    <property type="gene ID" value="Npun_R4417"/>
</dbReference>
<dbReference type="KEGG" id="npu:Npun_R4417"/>
<dbReference type="eggNOG" id="COG0055">
    <property type="taxonomic scope" value="Bacteria"/>
</dbReference>
<dbReference type="HOGENOM" id="CLU_022398_0_2_3"/>
<dbReference type="OrthoDB" id="9801639at2"/>
<dbReference type="PhylomeDB" id="B2IUL2"/>
<dbReference type="Proteomes" id="UP000001191">
    <property type="component" value="Chromosome"/>
</dbReference>
<dbReference type="GO" id="GO:0031676">
    <property type="term" value="C:plasma membrane-derived thylakoid membrane"/>
    <property type="evidence" value="ECO:0007669"/>
    <property type="project" value="UniProtKB-SubCell"/>
</dbReference>
<dbReference type="GO" id="GO:0045259">
    <property type="term" value="C:proton-transporting ATP synthase complex"/>
    <property type="evidence" value="ECO:0007669"/>
    <property type="project" value="UniProtKB-KW"/>
</dbReference>
<dbReference type="GO" id="GO:0005524">
    <property type="term" value="F:ATP binding"/>
    <property type="evidence" value="ECO:0007669"/>
    <property type="project" value="UniProtKB-UniRule"/>
</dbReference>
<dbReference type="GO" id="GO:0016887">
    <property type="term" value="F:ATP hydrolysis activity"/>
    <property type="evidence" value="ECO:0007669"/>
    <property type="project" value="InterPro"/>
</dbReference>
<dbReference type="GO" id="GO:0046933">
    <property type="term" value="F:proton-transporting ATP synthase activity, rotational mechanism"/>
    <property type="evidence" value="ECO:0007669"/>
    <property type="project" value="UniProtKB-UniRule"/>
</dbReference>
<dbReference type="CDD" id="cd18110">
    <property type="entry name" value="ATP-synt_F1_beta_C"/>
    <property type="match status" value="1"/>
</dbReference>
<dbReference type="CDD" id="cd18115">
    <property type="entry name" value="ATP-synt_F1_beta_N"/>
    <property type="match status" value="1"/>
</dbReference>
<dbReference type="CDD" id="cd01133">
    <property type="entry name" value="F1-ATPase_beta_CD"/>
    <property type="match status" value="1"/>
</dbReference>
<dbReference type="FunFam" id="1.10.1140.10:FF:000001">
    <property type="entry name" value="ATP synthase subunit beta"/>
    <property type="match status" value="1"/>
</dbReference>
<dbReference type="FunFam" id="3.40.50.12240:FF:000006">
    <property type="entry name" value="ATP synthase subunit beta"/>
    <property type="match status" value="1"/>
</dbReference>
<dbReference type="FunFam" id="3.40.50.300:FF:000026">
    <property type="entry name" value="ATP synthase subunit beta"/>
    <property type="match status" value="1"/>
</dbReference>
<dbReference type="FunFam" id="2.40.10.170:FF:000002">
    <property type="entry name" value="ATP synthase subunit beta, chloroplastic"/>
    <property type="match status" value="1"/>
</dbReference>
<dbReference type="Gene3D" id="2.40.10.170">
    <property type="match status" value="1"/>
</dbReference>
<dbReference type="Gene3D" id="1.10.1140.10">
    <property type="entry name" value="Bovine Mitochondrial F1-atpase, Atp Synthase Beta Chain, Chain D, domain 3"/>
    <property type="match status" value="1"/>
</dbReference>
<dbReference type="Gene3D" id="3.40.50.300">
    <property type="entry name" value="P-loop containing nucleotide triphosphate hydrolases"/>
    <property type="match status" value="1"/>
</dbReference>
<dbReference type="HAMAP" id="MF_01347">
    <property type="entry name" value="ATP_synth_beta_bact"/>
    <property type="match status" value="1"/>
</dbReference>
<dbReference type="InterPro" id="IPR003593">
    <property type="entry name" value="AAA+_ATPase"/>
</dbReference>
<dbReference type="InterPro" id="IPR055190">
    <property type="entry name" value="ATP-synt_VA_C"/>
</dbReference>
<dbReference type="InterPro" id="IPR005722">
    <property type="entry name" value="ATP_synth_F1_bsu"/>
</dbReference>
<dbReference type="InterPro" id="IPR020003">
    <property type="entry name" value="ATPase_a/bsu_AS"/>
</dbReference>
<dbReference type="InterPro" id="IPR050053">
    <property type="entry name" value="ATPase_alpha/beta_chains"/>
</dbReference>
<dbReference type="InterPro" id="IPR004100">
    <property type="entry name" value="ATPase_F1/V1/A1_a/bsu_N"/>
</dbReference>
<dbReference type="InterPro" id="IPR036121">
    <property type="entry name" value="ATPase_F1/V1/A1_a/bsu_N_sf"/>
</dbReference>
<dbReference type="InterPro" id="IPR000194">
    <property type="entry name" value="ATPase_F1/V1/A1_a/bsu_nucl-bd"/>
</dbReference>
<dbReference type="InterPro" id="IPR024034">
    <property type="entry name" value="ATPase_F1/V1_b/a_C"/>
</dbReference>
<dbReference type="InterPro" id="IPR027417">
    <property type="entry name" value="P-loop_NTPase"/>
</dbReference>
<dbReference type="NCBIfam" id="TIGR01039">
    <property type="entry name" value="atpD"/>
    <property type="match status" value="1"/>
</dbReference>
<dbReference type="PANTHER" id="PTHR15184">
    <property type="entry name" value="ATP SYNTHASE"/>
    <property type="match status" value="1"/>
</dbReference>
<dbReference type="PANTHER" id="PTHR15184:SF71">
    <property type="entry name" value="ATP SYNTHASE SUBUNIT BETA, MITOCHONDRIAL"/>
    <property type="match status" value="1"/>
</dbReference>
<dbReference type="Pfam" id="PF00006">
    <property type="entry name" value="ATP-synt_ab"/>
    <property type="match status" value="1"/>
</dbReference>
<dbReference type="Pfam" id="PF02874">
    <property type="entry name" value="ATP-synt_ab_N"/>
    <property type="match status" value="1"/>
</dbReference>
<dbReference type="Pfam" id="PF22919">
    <property type="entry name" value="ATP-synt_VA_C"/>
    <property type="match status" value="1"/>
</dbReference>
<dbReference type="PIRSF" id="PIRSF039072">
    <property type="entry name" value="ATPase_subunit_beta"/>
    <property type="match status" value="1"/>
</dbReference>
<dbReference type="SMART" id="SM00382">
    <property type="entry name" value="AAA"/>
    <property type="match status" value="1"/>
</dbReference>
<dbReference type="SUPFAM" id="SSF47917">
    <property type="entry name" value="C-terminal domain of alpha and beta subunits of F1 ATP synthase"/>
    <property type="match status" value="1"/>
</dbReference>
<dbReference type="SUPFAM" id="SSF50615">
    <property type="entry name" value="N-terminal domain of alpha and beta subunits of F1 ATP synthase"/>
    <property type="match status" value="1"/>
</dbReference>
<dbReference type="SUPFAM" id="SSF52540">
    <property type="entry name" value="P-loop containing nucleoside triphosphate hydrolases"/>
    <property type="match status" value="1"/>
</dbReference>
<dbReference type="PROSITE" id="PS00152">
    <property type="entry name" value="ATPASE_ALPHA_BETA"/>
    <property type="match status" value="1"/>
</dbReference>
<proteinExistence type="inferred from homology"/>
<evidence type="ECO:0000255" key="1">
    <source>
        <dbReference type="HAMAP-Rule" id="MF_01347"/>
    </source>
</evidence>
<organism>
    <name type="scientific">Nostoc punctiforme (strain ATCC 29133 / PCC 73102)</name>
    <dbReference type="NCBI Taxonomy" id="63737"/>
    <lineage>
        <taxon>Bacteria</taxon>
        <taxon>Bacillati</taxon>
        <taxon>Cyanobacteriota</taxon>
        <taxon>Cyanophyceae</taxon>
        <taxon>Nostocales</taxon>
        <taxon>Nostocaceae</taxon>
        <taxon>Nostoc</taxon>
    </lineage>
</organism>
<keyword id="KW-0066">ATP synthesis</keyword>
<keyword id="KW-0067">ATP-binding</keyword>
<keyword id="KW-0139">CF(1)</keyword>
<keyword id="KW-0375">Hydrogen ion transport</keyword>
<keyword id="KW-0406">Ion transport</keyword>
<keyword id="KW-0472">Membrane</keyword>
<keyword id="KW-0547">Nucleotide-binding</keyword>
<keyword id="KW-1185">Reference proteome</keyword>
<keyword id="KW-0793">Thylakoid</keyword>
<keyword id="KW-1278">Translocase</keyword>
<keyword id="KW-0813">Transport</keyword>
<feature type="chain" id="PRO_1000143526" description="ATP synthase subunit beta">
    <location>
        <begin position="1"/>
        <end position="482"/>
    </location>
</feature>
<feature type="binding site" evidence="1">
    <location>
        <begin position="162"/>
        <end position="169"/>
    </location>
    <ligand>
        <name>ATP</name>
        <dbReference type="ChEBI" id="CHEBI:30616"/>
    </ligand>
</feature>
<reference key="1">
    <citation type="journal article" date="2013" name="Plant Physiol.">
        <title>A Nostoc punctiforme Sugar Transporter Necessary to Establish a Cyanobacterium-Plant Symbiosis.</title>
        <authorList>
            <person name="Ekman M."/>
            <person name="Picossi S."/>
            <person name="Campbell E.L."/>
            <person name="Meeks J.C."/>
            <person name="Flores E."/>
        </authorList>
    </citation>
    <scope>NUCLEOTIDE SEQUENCE [LARGE SCALE GENOMIC DNA]</scope>
    <source>
        <strain>ATCC 29133 / PCC 73102</strain>
    </source>
</reference>
<protein>
    <recommendedName>
        <fullName evidence="1">ATP synthase subunit beta</fullName>
        <ecNumber evidence="1">7.1.2.2</ecNumber>
    </recommendedName>
    <alternativeName>
        <fullName evidence="1">ATP synthase F1 sector subunit beta</fullName>
    </alternativeName>
    <alternativeName>
        <fullName evidence="1">F-ATPase subunit beta</fullName>
    </alternativeName>
</protein>